<name>OFOB2_SULTO</name>
<keyword id="KW-0002">3D-structure</keyword>
<keyword id="KW-0004">4Fe-4S</keyword>
<keyword id="KW-0408">Iron</keyword>
<keyword id="KW-0411">Iron-sulfur</keyword>
<keyword id="KW-0460">Magnesium</keyword>
<keyword id="KW-0479">Metal-binding</keyword>
<keyword id="KW-0560">Oxidoreductase</keyword>
<keyword id="KW-1185">Reference proteome</keyword>
<keyword id="KW-0786">Thiamine pyrophosphate</keyword>
<proteinExistence type="evidence at protein level"/>
<feature type="chain" id="PRO_0000445534" description="2-oxoacid:ferredoxin oxidoreductase 2, subunit beta">
    <location>
        <begin position="1"/>
        <end position="304"/>
    </location>
</feature>
<feature type="binding site" evidence="2 7 8">
    <location>
        <position position="12"/>
    </location>
    <ligand>
        <name>[4Fe-4S] cluster</name>
        <dbReference type="ChEBI" id="CHEBI:49883"/>
    </ligand>
</feature>
<feature type="binding site" evidence="2 7 8">
    <location>
        <position position="15"/>
    </location>
    <ligand>
        <name>[4Fe-4S] cluster</name>
        <dbReference type="ChEBI" id="CHEBI:49883"/>
    </ligand>
</feature>
<feature type="binding site" evidence="2 7 8">
    <location>
        <begin position="44"/>
        <end position="47"/>
    </location>
    <ligand>
        <name>thiamine diphosphate</name>
        <dbReference type="ChEBI" id="CHEBI:58937"/>
    </ligand>
</feature>
<feature type="binding site" evidence="2 7 8">
    <location>
        <position position="46"/>
    </location>
    <ligand>
        <name>[4Fe-4S] cluster</name>
        <dbReference type="ChEBI" id="CHEBI:49883"/>
    </ligand>
</feature>
<feature type="binding site" evidence="4">
    <location>
        <position position="65"/>
    </location>
    <ligand>
        <name>thiamine diphosphate</name>
        <dbReference type="ChEBI" id="CHEBI:58937"/>
    </ligand>
</feature>
<feature type="binding site" evidence="2 7 8">
    <location>
        <position position="90"/>
    </location>
    <ligand>
        <name>Mg(2+)</name>
        <dbReference type="ChEBI" id="CHEBI:18420"/>
    </ligand>
</feature>
<feature type="binding site" evidence="2 7">
    <location>
        <begin position="91"/>
        <end position="92"/>
    </location>
    <ligand>
        <name>thiamine diphosphate</name>
        <dbReference type="ChEBI" id="CHEBI:58937"/>
    </ligand>
</feature>
<feature type="binding site" evidence="2 7 8">
    <location>
        <position position="118"/>
    </location>
    <ligand>
        <name>Mg(2+)</name>
        <dbReference type="ChEBI" id="CHEBI:18420"/>
    </ligand>
</feature>
<feature type="binding site" evidence="2 7 8">
    <location>
        <position position="120"/>
    </location>
    <ligand>
        <name>Mg(2+)</name>
        <dbReference type="ChEBI" id="CHEBI:18420"/>
    </ligand>
</feature>
<feature type="binding site" evidence="2 7">
    <location>
        <begin position="122"/>
        <end position="123"/>
    </location>
    <ligand>
        <name>thiamine diphosphate</name>
        <dbReference type="ChEBI" id="CHEBI:58937"/>
    </ligand>
</feature>
<feature type="binding site" evidence="2 7 8">
    <location>
        <position position="197"/>
    </location>
    <ligand>
        <name>[4Fe-4S] cluster</name>
        <dbReference type="ChEBI" id="CHEBI:49883"/>
    </ligand>
</feature>
<feature type="site" description="Plays an important role in the binding of CoA" evidence="1">
    <location>
        <position position="125"/>
    </location>
</feature>
<feature type="helix" evidence="9">
    <location>
        <begin position="17"/>
        <end position="30"/>
    </location>
</feature>
<feature type="helix" evidence="9">
    <location>
        <begin position="35"/>
        <end position="37"/>
    </location>
</feature>
<feature type="strand" evidence="9">
    <location>
        <begin position="38"/>
        <end position="42"/>
    </location>
</feature>
<feature type="helix" evidence="9">
    <location>
        <begin position="47"/>
        <end position="53"/>
    </location>
</feature>
<feature type="strand" evidence="9">
    <location>
        <begin position="55"/>
        <end position="57"/>
    </location>
</feature>
<feature type="strand" evidence="9">
    <location>
        <begin position="59"/>
        <end position="62"/>
    </location>
</feature>
<feature type="helix" evidence="9">
    <location>
        <begin position="68"/>
        <end position="78"/>
    </location>
</feature>
<feature type="strand" evidence="9">
    <location>
        <begin position="82"/>
        <end position="89"/>
    </location>
</feature>
<feature type="helix" evidence="9">
    <location>
        <begin position="90"/>
        <end position="94"/>
    </location>
</feature>
<feature type="turn" evidence="9">
    <location>
        <begin position="95"/>
        <end position="97"/>
    </location>
</feature>
<feature type="helix" evidence="9">
    <location>
        <begin position="98"/>
        <end position="107"/>
    </location>
</feature>
<feature type="strand" evidence="9">
    <location>
        <begin position="112"/>
        <end position="117"/>
    </location>
</feature>
<feature type="strand" evidence="9">
    <location>
        <begin position="119"/>
        <end position="121"/>
    </location>
</feature>
<feature type="turn" evidence="9">
    <location>
        <begin position="122"/>
        <end position="125"/>
    </location>
</feature>
<feature type="helix" evidence="9">
    <location>
        <begin position="152"/>
        <end position="159"/>
    </location>
</feature>
<feature type="strand" evidence="9">
    <location>
        <begin position="162"/>
        <end position="168"/>
    </location>
</feature>
<feature type="helix" evidence="9">
    <location>
        <begin position="172"/>
        <end position="184"/>
    </location>
</feature>
<feature type="strand" evidence="9">
    <location>
        <begin position="185"/>
        <end position="187"/>
    </location>
</feature>
<feature type="strand" evidence="9">
    <location>
        <begin position="189"/>
        <end position="194"/>
    </location>
</feature>
<feature type="strand" evidence="9">
    <location>
        <begin position="198"/>
        <end position="200"/>
    </location>
</feature>
<feature type="strand" evidence="9">
    <location>
        <begin position="202"/>
        <end position="204"/>
    </location>
</feature>
<feature type="helix" evidence="9">
    <location>
        <begin position="206"/>
        <end position="210"/>
    </location>
</feature>
<feature type="strand" evidence="9">
    <location>
        <begin position="213"/>
        <end position="215"/>
    </location>
</feature>
<feature type="helix" evidence="9">
    <location>
        <begin position="216"/>
        <end position="218"/>
    </location>
</feature>
<feature type="helix" evidence="9">
    <location>
        <begin position="229"/>
        <end position="231"/>
    </location>
</feature>
<feature type="helix" evidence="9">
    <location>
        <begin position="232"/>
        <end position="243"/>
    </location>
</feature>
<feature type="strand" evidence="9">
    <location>
        <begin position="250"/>
        <end position="258"/>
    </location>
</feature>
<feature type="helix" evidence="9">
    <location>
        <begin position="264"/>
        <end position="271"/>
    </location>
</feature>
<feature type="turn" evidence="9">
    <location>
        <begin position="273"/>
        <end position="277"/>
    </location>
</feature>
<feature type="helix" evidence="9">
    <location>
        <begin position="280"/>
        <end position="282"/>
    </location>
</feature>
<feature type="helix" evidence="9">
    <location>
        <begin position="296"/>
        <end position="300"/>
    </location>
</feature>
<protein>
    <recommendedName>
        <fullName evidence="3">2-oxoacid:ferredoxin oxidoreductase 2, subunit beta</fullName>
        <shortName evidence="3">OFOR2</shortName>
        <ecNumber evidence="2">1.2.7.11</ecNumber>
    </recommendedName>
</protein>
<reference key="1">
    <citation type="journal article" date="2001" name="DNA Res.">
        <title>Complete genome sequence of an aerobic thermoacidophilic Crenarchaeon, Sulfolobus tokodaii strain7.</title>
        <authorList>
            <person name="Kawarabayasi Y."/>
            <person name="Hino Y."/>
            <person name="Horikawa H."/>
            <person name="Jin-no K."/>
            <person name="Takahashi M."/>
            <person name="Sekine M."/>
            <person name="Baba S."/>
            <person name="Ankai A."/>
            <person name="Kosugi H."/>
            <person name="Hosoyama A."/>
            <person name="Fukui S."/>
            <person name="Nagai Y."/>
            <person name="Nishijima K."/>
            <person name="Otsuka R."/>
            <person name="Nakazawa H."/>
            <person name="Takamiya M."/>
            <person name="Kato Y."/>
            <person name="Yoshizawa T."/>
            <person name="Tanaka T."/>
            <person name="Kudoh Y."/>
            <person name="Yamazaki J."/>
            <person name="Kushida N."/>
            <person name="Oguchi A."/>
            <person name="Aoki K."/>
            <person name="Masuda S."/>
            <person name="Yanagii M."/>
            <person name="Nishimura M."/>
            <person name="Yamagishi A."/>
            <person name="Oshima T."/>
            <person name="Kikuchi H."/>
        </authorList>
    </citation>
    <scope>NUCLEOTIDE SEQUENCE [LARGE SCALE GENOMIC DNA]</scope>
    <source>
        <strain evidence="6">DSM 16993 / JCM 10545 / NBRC 100140 / 7</strain>
    </source>
</reference>
<reference key="2">
    <citation type="journal article" date="2016" name="Sci. Rep.">
        <title>Crystal structures of archaeal 2-oxoacid:ferredoxin oxidoreductases from Sulfolobus tokodaii.</title>
        <authorList>
            <person name="Yan Z."/>
            <person name="Maruyama A."/>
            <person name="Arakawa T."/>
            <person name="Fushinobu S."/>
            <person name="Wakagi T."/>
        </authorList>
    </citation>
    <scope>X-RAY CRYSTALLOGRAPHY (2.10 ANGSTROMS) IN COMPLEX WITH IRON-SULFUR (4FE-4S); MAGNESIUM ION AND THIAMINE PYROPHOSPHATE</scope>
    <scope>FUNCTION</scope>
    <scope>CATALYTIC ACTIVITY</scope>
    <scope>BIOPHYSICOCHEMICAL PROPERTIES</scope>
    <scope>COFACTOR</scope>
    <scope>SUBUNIT</scope>
    <scope>SUBSTRATE SPECIFICITY</scope>
    <source>
        <strain>DSM 16993 / JCM 10545 / NBRC 100140 / 7</strain>
    </source>
</reference>
<dbReference type="EC" id="1.2.7.11" evidence="2"/>
<dbReference type="EMBL" id="BA000023">
    <property type="protein sequence ID" value="BAB67543.1"/>
    <property type="molecule type" value="Genomic_DNA"/>
</dbReference>
<dbReference type="RefSeq" id="WP_010980518.1">
    <property type="nucleotide sequence ID" value="NC_003106.2"/>
</dbReference>
<dbReference type="PDB" id="5B46">
    <property type="method" value="X-ray"/>
    <property type="resolution" value="2.10 A"/>
    <property type="chains" value="B=1-304"/>
</dbReference>
<dbReference type="PDB" id="5B47">
    <property type="method" value="X-ray"/>
    <property type="resolution" value="2.20 A"/>
    <property type="chains" value="B=1-304"/>
</dbReference>
<dbReference type="PDBsum" id="5B46"/>
<dbReference type="PDBsum" id="5B47"/>
<dbReference type="SMR" id="Q96XT4"/>
<dbReference type="STRING" id="273063.STK_24330"/>
<dbReference type="GeneID" id="1460516"/>
<dbReference type="KEGG" id="sto:STK_24330"/>
<dbReference type="PATRIC" id="fig|273063.9.peg.2751"/>
<dbReference type="eggNOG" id="arCOG01599">
    <property type="taxonomic scope" value="Archaea"/>
</dbReference>
<dbReference type="OrthoDB" id="30755at2157"/>
<dbReference type="BRENDA" id="1.2.7.11">
    <property type="organism ID" value="15396"/>
</dbReference>
<dbReference type="Proteomes" id="UP000001015">
    <property type="component" value="Chromosome"/>
</dbReference>
<dbReference type="GO" id="GO:0018491">
    <property type="term" value="F:2-oxobutyrate synthase activity"/>
    <property type="evidence" value="ECO:0000314"/>
    <property type="project" value="UniProtKB"/>
</dbReference>
<dbReference type="GO" id="GO:0047553">
    <property type="term" value="F:2-oxoglutarate synthase activity"/>
    <property type="evidence" value="ECO:0000314"/>
    <property type="project" value="UniProtKB"/>
</dbReference>
<dbReference type="GO" id="GO:0051539">
    <property type="term" value="F:4 iron, 4 sulfur cluster binding"/>
    <property type="evidence" value="ECO:0000314"/>
    <property type="project" value="UniProtKB"/>
</dbReference>
<dbReference type="GO" id="GO:0000287">
    <property type="term" value="F:magnesium ion binding"/>
    <property type="evidence" value="ECO:0000314"/>
    <property type="project" value="UniProtKB"/>
</dbReference>
<dbReference type="GO" id="GO:0019164">
    <property type="term" value="F:pyruvate synthase activity"/>
    <property type="evidence" value="ECO:0000314"/>
    <property type="project" value="UniProtKB"/>
</dbReference>
<dbReference type="GO" id="GO:0030976">
    <property type="term" value="F:thiamine pyrophosphate binding"/>
    <property type="evidence" value="ECO:0000314"/>
    <property type="project" value="UniProtKB"/>
</dbReference>
<dbReference type="CDD" id="cd03375">
    <property type="entry name" value="TPP_OGFOR"/>
    <property type="match status" value="1"/>
</dbReference>
<dbReference type="FunFam" id="3.40.50.970:FF:000049">
    <property type="entry name" value="2-oxoglutarate ferredoxin oxidoreductase subunit beta"/>
    <property type="match status" value="1"/>
</dbReference>
<dbReference type="Gene3D" id="3.40.50.970">
    <property type="match status" value="1"/>
</dbReference>
<dbReference type="InterPro" id="IPR053399">
    <property type="entry name" value="2-oxoacid:Fd_oxidored_beta"/>
</dbReference>
<dbReference type="InterPro" id="IPR051457">
    <property type="entry name" value="2-oxoacid:Fd_oxidoreductase"/>
</dbReference>
<dbReference type="InterPro" id="IPR011896">
    <property type="entry name" value="OFOB"/>
</dbReference>
<dbReference type="InterPro" id="IPR032686">
    <property type="entry name" value="PFO_beta_C"/>
</dbReference>
<dbReference type="InterPro" id="IPR029061">
    <property type="entry name" value="THDP-binding"/>
</dbReference>
<dbReference type="InterPro" id="IPR011766">
    <property type="entry name" value="TPP_enzyme_TPP-bd"/>
</dbReference>
<dbReference type="NCBIfam" id="NF041171">
    <property type="entry name" value="Oxoac_fdxbeta_Archa"/>
    <property type="match status" value="1"/>
</dbReference>
<dbReference type="NCBIfam" id="TIGR02177">
    <property type="entry name" value="PorB_KorB"/>
    <property type="match status" value="1"/>
</dbReference>
<dbReference type="PANTHER" id="PTHR48084">
    <property type="entry name" value="2-OXOGLUTARATE OXIDOREDUCTASE SUBUNIT KORB-RELATED"/>
    <property type="match status" value="1"/>
</dbReference>
<dbReference type="PANTHER" id="PTHR48084:SF2">
    <property type="entry name" value="PYRUVATE FERREDOXIN_FLAVODOXIN OXIDOREDUCTASE, BETA SUBUNIT"/>
    <property type="match status" value="1"/>
</dbReference>
<dbReference type="Pfam" id="PF12367">
    <property type="entry name" value="PFO_beta_C"/>
    <property type="match status" value="1"/>
</dbReference>
<dbReference type="Pfam" id="PF02775">
    <property type="entry name" value="TPP_enzyme_C"/>
    <property type="match status" value="1"/>
</dbReference>
<dbReference type="SUPFAM" id="SSF52518">
    <property type="entry name" value="Thiamin diphosphate-binding fold (THDP-binding)"/>
    <property type="match status" value="1"/>
</dbReference>
<accession>Q96XT4</accession>
<gene>
    <name evidence="5" type="primary">ST2433</name>
    <name evidence="5" type="ordered locus">STK_24330</name>
</gene>
<evidence type="ECO:0000250" key="1">
    <source>
        <dbReference type="UniProtKB" id="Q96Y68"/>
    </source>
</evidence>
<evidence type="ECO:0000269" key="2">
    <source>
    </source>
</evidence>
<evidence type="ECO:0000303" key="3">
    <source>
    </source>
</evidence>
<evidence type="ECO:0000305" key="4">
    <source>
    </source>
</evidence>
<evidence type="ECO:0000312" key="5">
    <source>
        <dbReference type="EMBL" id="BAB67543.1"/>
    </source>
</evidence>
<evidence type="ECO:0000312" key="6">
    <source>
        <dbReference type="Proteomes" id="UP000001015"/>
    </source>
</evidence>
<evidence type="ECO:0007744" key="7">
    <source>
        <dbReference type="PDB" id="5B46"/>
    </source>
</evidence>
<evidence type="ECO:0007744" key="8">
    <source>
        <dbReference type="PDB" id="5B47"/>
    </source>
</evidence>
<evidence type="ECO:0007829" key="9">
    <source>
        <dbReference type="PDB" id="5B46"/>
    </source>
</evidence>
<sequence>MVERKPVFVDWCPGCGDFGILRAEEMAIRELGINPKSVVIVSGIGCSGKIPHFMNLPISGVHTLHGRSIAFATGIKLSNPSLEVIVNVGDGDGLGIGMGHFVHLGRRNIDIAVLVHNNGVYGLTKGQASPTLHRGEKTKSLPKPNIMDAVNPLAVALAAGYTFVARGYAYDVMHLKELIKKAILHKGSALVDILQPCPTYNDINTKEWYDKRVYKLDNVPGWDPVVRKEEEAQKKFEQAIMKSYEWGEKIPIGIFYQNELVPTFEDRLTSNIPNYREYYPAKQQIEINGISTTKIDELIKAKRI</sequence>
<comment type="function">
    <text evidence="2">Catalyzes the coenzyme A-dependent oxidative decarboxylation of different 2-oxoacids such as 2-oxoglutarate, pyruvate and 2-oxobutyrate to form their CoA derivatives.</text>
</comment>
<comment type="catalytic activity">
    <reaction evidence="2">
        <text>a 2-oxocarboxylate + 2 oxidized [2Fe-2S]-[ferredoxin] + CoA = an acyl-CoA + 2 reduced [2Fe-2S]-[ferredoxin] + CO2 + H(+)</text>
        <dbReference type="Rhea" id="RHEA:42316"/>
        <dbReference type="Rhea" id="RHEA-COMP:10000"/>
        <dbReference type="Rhea" id="RHEA-COMP:10001"/>
        <dbReference type="ChEBI" id="CHEBI:15378"/>
        <dbReference type="ChEBI" id="CHEBI:16526"/>
        <dbReference type="ChEBI" id="CHEBI:33737"/>
        <dbReference type="ChEBI" id="CHEBI:33738"/>
        <dbReference type="ChEBI" id="CHEBI:35179"/>
        <dbReference type="ChEBI" id="CHEBI:57287"/>
        <dbReference type="ChEBI" id="CHEBI:58342"/>
        <dbReference type="EC" id="1.2.7.11"/>
    </reaction>
</comment>
<comment type="cofactor">
    <cofactor evidence="2">
        <name>[4Fe-4S] cluster</name>
        <dbReference type="ChEBI" id="CHEBI:49883"/>
    </cofactor>
    <text evidence="2">Binds 1 [4Fe-4S] cluster per subunit.</text>
</comment>
<comment type="cofactor">
    <cofactor evidence="2">
        <name>thiamine diphosphate</name>
        <dbReference type="ChEBI" id="CHEBI:58937"/>
    </cofactor>
    <text evidence="2">Binds 1 thiamine pyrophosphate per subunit.</text>
</comment>
<comment type="cofactor">
    <cofactor evidence="2">
        <name>Mg(2+)</name>
        <dbReference type="ChEBI" id="CHEBI:18420"/>
    </cofactor>
    <text evidence="2">Binds 1 Mg(2+) per subunit.</text>
</comment>
<comment type="biophysicochemical properties">
    <kinetics>
        <KM evidence="2">1.6 mM for pyruvate</KM>
        <KM evidence="2">15 mM for 2-oxoglutarate</KM>
        <Vmax evidence="2">7.0 umol/min/mg enzyme with pyruvate as substrate</Vmax>
        <Vmax evidence="2">1.4 umol/min/mg enzyme with 2-oxoglutarate as substrate</Vmax>
    </kinetics>
</comment>
<comment type="subunit">
    <text evidence="2">Heterodimer composed of an alpha and a beta subunit.</text>
</comment>
<organism>
    <name type="scientific">Sulfurisphaera tokodaii (strain DSM 16993 / JCM 10545 / NBRC 100140 / 7)</name>
    <name type="common">Sulfolobus tokodaii</name>
    <dbReference type="NCBI Taxonomy" id="273063"/>
    <lineage>
        <taxon>Archaea</taxon>
        <taxon>Thermoproteota</taxon>
        <taxon>Thermoprotei</taxon>
        <taxon>Sulfolobales</taxon>
        <taxon>Sulfolobaceae</taxon>
        <taxon>Sulfurisphaera</taxon>
    </lineage>
</organism>